<reference key="1">
    <citation type="journal article" date="2007" name="J. Bacteriol.">
        <title>Genome sequence of Avery's virulent serotype 2 strain D39 of Streptococcus pneumoniae and comparison with that of unencapsulated laboratory strain R6.</title>
        <authorList>
            <person name="Lanie J.A."/>
            <person name="Ng W.-L."/>
            <person name="Kazmierczak K.M."/>
            <person name="Andrzejewski T.M."/>
            <person name="Davidsen T.M."/>
            <person name="Wayne K.J."/>
            <person name="Tettelin H."/>
            <person name="Glass J.I."/>
            <person name="Winkler M.E."/>
        </authorList>
    </citation>
    <scope>NUCLEOTIDE SEQUENCE [LARGE SCALE GENOMIC DNA]</scope>
    <source>
        <strain>D39 / NCTC 7466</strain>
    </source>
</reference>
<gene>
    <name evidence="1" type="primary">thrS</name>
    <name type="ordered locus">SPD_1444</name>
</gene>
<protein>
    <recommendedName>
        <fullName evidence="1">Threonine--tRNA ligase</fullName>
        <ecNumber evidence="1">6.1.1.3</ecNumber>
    </recommendedName>
    <alternativeName>
        <fullName evidence="1">Threonyl-tRNA synthetase</fullName>
        <shortName evidence="1">ThrRS</shortName>
    </alternativeName>
</protein>
<keyword id="KW-0030">Aminoacyl-tRNA synthetase</keyword>
<keyword id="KW-0067">ATP-binding</keyword>
<keyword id="KW-0963">Cytoplasm</keyword>
<keyword id="KW-0436">Ligase</keyword>
<keyword id="KW-0479">Metal-binding</keyword>
<keyword id="KW-0547">Nucleotide-binding</keyword>
<keyword id="KW-0648">Protein biosynthesis</keyword>
<keyword id="KW-1185">Reference proteome</keyword>
<keyword id="KW-0694">RNA-binding</keyword>
<keyword id="KW-0820">tRNA-binding</keyword>
<keyword id="KW-0862">Zinc</keyword>
<sequence>MINITFPDGAVREFESGVTTFEIAQSISNSLAKKALAGKFNGKLIDTTRAITEDGSIEIVTPDHEDALPILRHSATHLFAQAARRLFPDIHLGVGPAIEDGFYYDTDHTAGQISNEDLPRIEEEMQKIVKENFPSIREEVTKDEAREIFKNDPYKLELIEEHSEDEGGLTIYRQGEYVDLCRGPHVPSTGRIQIFHLLHVAGAYWRGNSDNAMMQRIYGTAWFDKKDLKNYLQMREEAKERDHRKLGKELDLFMISQEVGQGLPFWLPNGATIRRELERYIVNKELVSGYQHVYTPPLASVELYKTSGHWDHYQEDMFPTMDMGDGEEFVLRPMNCPHHIQVFKHHVHSYRELPIRIAEIGMMHRYEKSGALTGLQRVREMSLNDGHLFVTPEQIQEEFQRALQLIIDVYEDFNLTDYRFRLSLRDPQDTHKYFDNDEMWENAQTMLRAALDEMGVDYFEAEGEAAFYGPKLDIQIKTALGKEETLSTIQLDFLLPERFDLKYIGADGEDHRPVMIHRGVISTMERFTAILIENYKGAFPTWLAPHQVTLIPVSNEKHVDYAWEVAKKLRDRGVRADVDERNEKMQFKIRASQTSKIPYQLIVGDKEMEDETVNVRRYGQKETQTVSVDNFVQAILADIANKSRVEK</sequence>
<dbReference type="EC" id="6.1.1.3" evidence="1"/>
<dbReference type="EMBL" id="CP000410">
    <property type="protein sequence ID" value="ABJ53634.1"/>
    <property type="molecule type" value="Genomic_DNA"/>
</dbReference>
<dbReference type="RefSeq" id="WP_000608365.1">
    <property type="nucleotide sequence ID" value="NZ_JAMLJR010000013.1"/>
</dbReference>
<dbReference type="SMR" id="Q04JD7"/>
<dbReference type="PaxDb" id="373153-SPD_1444"/>
<dbReference type="KEGG" id="spd:SPD_1444"/>
<dbReference type="eggNOG" id="COG0441">
    <property type="taxonomic scope" value="Bacteria"/>
</dbReference>
<dbReference type="HOGENOM" id="CLU_008554_0_1_9"/>
<dbReference type="BioCyc" id="SPNE373153:G1G6V-1558-MONOMER"/>
<dbReference type="Proteomes" id="UP000001452">
    <property type="component" value="Chromosome"/>
</dbReference>
<dbReference type="GO" id="GO:0005737">
    <property type="term" value="C:cytoplasm"/>
    <property type="evidence" value="ECO:0007669"/>
    <property type="project" value="UniProtKB-SubCell"/>
</dbReference>
<dbReference type="GO" id="GO:0005524">
    <property type="term" value="F:ATP binding"/>
    <property type="evidence" value="ECO:0007669"/>
    <property type="project" value="UniProtKB-UniRule"/>
</dbReference>
<dbReference type="GO" id="GO:0140096">
    <property type="term" value="F:catalytic activity, acting on a protein"/>
    <property type="evidence" value="ECO:0007669"/>
    <property type="project" value="UniProtKB-ARBA"/>
</dbReference>
<dbReference type="GO" id="GO:0046872">
    <property type="term" value="F:metal ion binding"/>
    <property type="evidence" value="ECO:0007669"/>
    <property type="project" value="UniProtKB-KW"/>
</dbReference>
<dbReference type="GO" id="GO:0004829">
    <property type="term" value="F:threonine-tRNA ligase activity"/>
    <property type="evidence" value="ECO:0007669"/>
    <property type="project" value="UniProtKB-UniRule"/>
</dbReference>
<dbReference type="GO" id="GO:0016740">
    <property type="term" value="F:transferase activity"/>
    <property type="evidence" value="ECO:0007669"/>
    <property type="project" value="UniProtKB-ARBA"/>
</dbReference>
<dbReference type="GO" id="GO:0000049">
    <property type="term" value="F:tRNA binding"/>
    <property type="evidence" value="ECO:0007669"/>
    <property type="project" value="UniProtKB-KW"/>
</dbReference>
<dbReference type="GO" id="GO:0006435">
    <property type="term" value="P:threonyl-tRNA aminoacylation"/>
    <property type="evidence" value="ECO:0007669"/>
    <property type="project" value="UniProtKB-UniRule"/>
</dbReference>
<dbReference type="CDD" id="cd01667">
    <property type="entry name" value="TGS_ThrRS"/>
    <property type="match status" value="1"/>
</dbReference>
<dbReference type="CDD" id="cd00860">
    <property type="entry name" value="ThrRS_anticodon"/>
    <property type="match status" value="1"/>
</dbReference>
<dbReference type="CDD" id="cd00771">
    <property type="entry name" value="ThrRS_core"/>
    <property type="match status" value="1"/>
</dbReference>
<dbReference type="FunFam" id="3.10.20.30:FF:000005">
    <property type="entry name" value="Threonine--tRNA ligase"/>
    <property type="match status" value="1"/>
</dbReference>
<dbReference type="FunFam" id="3.30.54.20:FF:000002">
    <property type="entry name" value="Threonine--tRNA ligase"/>
    <property type="match status" value="1"/>
</dbReference>
<dbReference type="FunFam" id="3.30.930.10:FF:000002">
    <property type="entry name" value="Threonine--tRNA ligase"/>
    <property type="match status" value="1"/>
</dbReference>
<dbReference type="FunFam" id="3.40.50.800:FF:000001">
    <property type="entry name" value="Threonine--tRNA ligase"/>
    <property type="match status" value="1"/>
</dbReference>
<dbReference type="FunFam" id="3.30.980.10:FF:000005">
    <property type="entry name" value="Threonyl-tRNA synthetase, mitochondrial"/>
    <property type="match status" value="1"/>
</dbReference>
<dbReference type="Gene3D" id="3.10.20.30">
    <property type="match status" value="1"/>
</dbReference>
<dbReference type="Gene3D" id="3.30.54.20">
    <property type="match status" value="1"/>
</dbReference>
<dbReference type="Gene3D" id="3.40.50.800">
    <property type="entry name" value="Anticodon-binding domain"/>
    <property type="match status" value="1"/>
</dbReference>
<dbReference type="Gene3D" id="3.30.930.10">
    <property type="entry name" value="Bira Bifunctional Protein, Domain 2"/>
    <property type="match status" value="1"/>
</dbReference>
<dbReference type="Gene3D" id="3.30.980.10">
    <property type="entry name" value="Threonyl-trna Synthetase, Chain A, domain 2"/>
    <property type="match status" value="1"/>
</dbReference>
<dbReference type="HAMAP" id="MF_00184">
    <property type="entry name" value="Thr_tRNA_synth"/>
    <property type="match status" value="1"/>
</dbReference>
<dbReference type="InterPro" id="IPR002314">
    <property type="entry name" value="aa-tRNA-synt_IIb"/>
</dbReference>
<dbReference type="InterPro" id="IPR006195">
    <property type="entry name" value="aa-tRNA-synth_II"/>
</dbReference>
<dbReference type="InterPro" id="IPR045864">
    <property type="entry name" value="aa-tRNA-synth_II/BPL/LPL"/>
</dbReference>
<dbReference type="InterPro" id="IPR004154">
    <property type="entry name" value="Anticodon-bd"/>
</dbReference>
<dbReference type="InterPro" id="IPR036621">
    <property type="entry name" value="Anticodon-bd_dom_sf"/>
</dbReference>
<dbReference type="InterPro" id="IPR012675">
    <property type="entry name" value="Beta-grasp_dom_sf"/>
</dbReference>
<dbReference type="InterPro" id="IPR004095">
    <property type="entry name" value="TGS"/>
</dbReference>
<dbReference type="InterPro" id="IPR012676">
    <property type="entry name" value="TGS-like"/>
</dbReference>
<dbReference type="InterPro" id="IPR002320">
    <property type="entry name" value="Thr-tRNA-ligase_IIa"/>
</dbReference>
<dbReference type="InterPro" id="IPR018163">
    <property type="entry name" value="Thr/Ala-tRNA-synth_IIc_edit"/>
</dbReference>
<dbReference type="InterPro" id="IPR047246">
    <property type="entry name" value="ThrRS_anticodon"/>
</dbReference>
<dbReference type="InterPro" id="IPR033728">
    <property type="entry name" value="ThrRS_core"/>
</dbReference>
<dbReference type="InterPro" id="IPR012947">
    <property type="entry name" value="tRNA_SAD"/>
</dbReference>
<dbReference type="NCBIfam" id="TIGR00418">
    <property type="entry name" value="thrS"/>
    <property type="match status" value="1"/>
</dbReference>
<dbReference type="PANTHER" id="PTHR11451:SF56">
    <property type="entry name" value="THREONINE--TRNA LIGASE 1"/>
    <property type="match status" value="1"/>
</dbReference>
<dbReference type="PANTHER" id="PTHR11451">
    <property type="entry name" value="THREONINE-TRNA LIGASE"/>
    <property type="match status" value="1"/>
</dbReference>
<dbReference type="Pfam" id="PF03129">
    <property type="entry name" value="HGTP_anticodon"/>
    <property type="match status" value="1"/>
</dbReference>
<dbReference type="Pfam" id="PF02824">
    <property type="entry name" value="TGS"/>
    <property type="match status" value="1"/>
</dbReference>
<dbReference type="Pfam" id="PF00587">
    <property type="entry name" value="tRNA-synt_2b"/>
    <property type="match status" value="1"/>
</dbReference>
<dbReference type="Pfam" id="PF07973">
    <property type="entry name" value="tRNA_SAD"/>
    <property type="match status" value="1"/>
</dbReference>
<dbReference type="PRINTS" id="PR01047">
    <property type="entry name" value="TRNASYNTHTHR"/>
</dbReference>
<dbReference type="SMART" id="SM00863">
    <property type="entry name" value="tRNA_SAD"/>
    <property type="match status" value="1"/>
</dbReference>
<dbReference type="SUPFAM" id="SSF52954">
    <property type="entry name" value="Class II aaRS ABD-related"/>
    <property type="match status" value="1"/>
</dbReference>
<dbReference type="SUPFAM" id="SSF55681">
    <property type="entry name" value="Class II aaRS and biotin synthetases"/>
    <property type="match status" value="1"/>
</dbReference>
<dbReference type="SUPFAM" id="SSF81271">
    <property type="entry name" value="TGS-like"/>
    <property type="match status" value="1"/>
</dbReference>
<dbReference type="SUPFAM" id="SSF55186">
    <property type="entry name" value="ThrRS/AlaRS common domain"/>
    <property type="match status" value="1"/>
</dbReference>
<dbReference type="PROSITE" id="PS50862">
    <property type="entry name" value="AA_TRNA_LIGASE_II"/>
    <property type="match status" value="1"/>
</dbReference>
<dbReference type="PROSITE" id="PS51880">
    <property type="entry name" value="TGS"/>
    <property type="match status" value="1"/>
</dbReference>
<feature type="chain" id="PRO_1000020526" description="Threonine--tRNA ligase">
    <location>
        <begin position="1"/>
        <end position="647"/>
    </location>
</feature>
<feature type="domain" description="TGS" evidence="2">
    <location>
        <begin position="1"/>
        <end position="61"/>
    </location>
</feature>
<feature type="region of interest" description="Catalytic" evidence="1">
    <location>
        <begin position="242"/>
        <end position="540"/>
    </location>
</feature>
<feature type="binding site" evidence="1">
    <location>
        <position position="336"/>
    </location>
    <ligand>
        <name>Zn(2+)</name>
        <dbReference type="ChEBI" id="CHEBI:29105"/>
    </ligand>
</feature>
<feature type="binding site" evidence="1">
    <location>
        <position position="387"/>
    </location>
    <ligand>
        <name>Zn(2+)</name>
        <dbReference type="ChEBI" id="CHEBI:29105"/>
    </ligand>
</feature>
<feature type="binding site" evidence="1">
    <location>
        <position position="517"/>
    </location>
    <ligand>
        <name>Zn(2+)</name>
        <dbReference type="ChEBI" id="CHEBI:29105"/>
    </ligand>
</feature>
<evidence type="ECO:0000255" key="1">
    <source>
        <dbReference type="HAMAP-Rule" id="MF_00184"/>
    </source>
</evidence>
<evidence type="ECO:0000255" key="2">
    <source>
        <dbReference type="PROSITE-ProRule" id="PRU01228"/>
    </source>
</evidence>
<accession>Q04JD7</accession>
<organism>
    <name type="scientific">Streptococcus pneumoniae serotype 2 (strain D39 / NCTC 7466)</name>
    <dbReference type="NCBI Taxonomy" id="373153"/>
    <lineage>
        <taxon>Bacteria</taxon>
        <taxon>Bacillati</taxon>
        <taxon>Bacillota</taxon>
        <taxon>Bacilli</taxon>
        <taxon>Lactobacillales</taxon>
        <taxon>Streptococcaceae</taxon>
        <taxon>Streptococcus</taxon>
    </lineage>
</organism>
<name>SYT_STRP2</name>
<comment type="function">
    <text evidence="1">Catalyzes the attachment of threonine to tRNA(Thr) in a two-step reaction: L-threonine is first activated by ATP to form Thr-AMP and then transferred to the acceptor end of tRNA(Thr). Also edits incorrectly charged L-seryl-tRNA(Thr).</text>
</comment>
<comment type="catalytic activity">
    <reaction evidence="1">
        <text>tRNA(Thr) + L-threonine + ATP = L-threonyl-tRNA(Thr) + AMP + diphosphate + H(+)</text>
        <dbReference type="Rhea" id="RHEA:24624"/>
        <dbReference type="Rhea" id="RHEA-COMP:9670"/>
        <dbReference type="Rhea" id="RHEA-COMP:9704"/>
        <dbReference type="ChEBI" id="CHEBI:15378"/>
        <dbReference type="ChEBI" id="CHEBI:30616"/>
        <dbReference type="ChEBI" id="CHEBI:33019"/>
        <dbReference type="ChEBI" id="CHEBI:57926"/>
        <dbReference type="ChEBI" id="CHEBI:78442"/>
        <dbReference type="ChEBI" id="CHEBI:78534"/>
        <dbReference type="ChEBI" id="CHEBI:456215"/>
        <dbReference type="EC" id="6.1.1.3"/>
    </reaction>
</comment>
<comment type="cofactor">
    <cofactor evidence="1">
        <name>Zn(2+)</name>
        <dbReference type="ChEBI" id="CHEBI:29105"/>
    </cofactor>
    <text evidence="1">Binds 1 zinc ion per subunit.</text>
</comment>
<comment type="subunit">
    <text evidence="1">Homodimer.</text>
</comment>
<comment type="subcellular location">
    <subcellularLocation>
        <location evidence="1">Cytoplasm</location>
    </subcellularLocation>
</comment>
<comment type="similarity">
    <text evidence="1">Belongs to the class-II aminoacyl-tRNA synthetase family.</text>
</comment>
<proteinExistence type="inferred from homology"/>